<reference key="1">
    <citation type="journal article" date="2018" name="ChemBioChem">
        <title>Iterative l-tryptophan methylation in Psilocybe evolved by subdomain duplication.</title>
        <authorList>
            <person name="Blei F."/>
            <person name="Fricke J."/>
            <person name="Wick J."/>
            <person name="Slot J.C."/>
            <person name="Hoffmeister D."/>
        </authorList>
    </citation>
    <scope>NUCLEOTIDE SEQUENCE [GENOMIC DNA]</scope>
    <scope>FUNCTION</scope>
    <scope>CATALYTIC ACTIVITY</scope>
    <scope>BIOPHYSICOCHEMICAL PROPERTIES</scope>
    <source>
        <strain>FSU 12416</strain>
    </source>
</reference>
<reference key="2">
    <citation type="journal article" date="2024" name="Biotechnol. Prog.">
        <title>Evaluation of TrpM and PsiD substrate promiscuity reveals new biocatalytic capabilities.</title>
        <authorList>
            <person name="Kanis F.C."/>
            <person name="Broude C.N."/>
            <person name="Hellwarth E.B."/>
            <person name="Gibbons W.J. Jr."/>
            <person name="Sen A.K."/>
            <person name="Adams A.M."/>
            <person name="Wang X."/>
            <person name="Jones J.A."/>
        </authorList>
    </citation>
    <scope>FUNCTION</scope>
    <scope>CATALYTIC ACTIVITY</scope>
    <scope>BIOPHYSICOCHEMICAL PROPERTIES</scope>
</reference>
<sequence>MPRIQVLDIRGSKESVGSTPHLRAAILEGLLKPPGSRTLPSETLYDEVGLKMYNDGMKAWAEWYYPVEAERQILERYGRDIAKLFTTSAKGKAVLIELGAGSLDKTSQVLLSAAEITRTTGPMNNIAYYALDLERGELERTIGRLQEVIGDQIAGKISTAGMWGTYDDGIRVIEKNELELEPDIPVHILFLGGTIGNFSKQDGDVAFLKSLPLDHKRGDTLLVGMDRHKSADAIERSYGFAAAKDWIMNGLKVSGRVLTGDEGLFEIGNWERYAKYNEELGRYEAGYKSQKEHALKISEGVDITFLKDEVVLVMFSNKYTDAEMDSVVDSAGLVKNGSWMDEKAQYCLLSLRANNGPV</sequence>
<feature type="chain" id="PRO_0000461131" description="L-tryptophan methyltransferase trpM">
    <location>
        <begin position="1"/>
        <end position="358"/>
    </location>
</feature>
<gene>
    <name evidence="3" type="primary">trpM</name>
</gene>
<dbReference type="EC" id="2.1.1.-" evidence="1 2"/>
<dbReference type="EMBL" id="MH423322">
    <property type="protein sequence ID" value="AXS67848.1"/>
    <property type="molecule type" value="Genomic_DNA"/>
</dbReference>
<dbReference type="SMR" id="A0A346RP51"/>
<dbReference type="GO" id="GO:0008168">
    <property type="term" value="F:methyltransferase activity"/>
    <property type="evidence" value="ECO:0007669"/>
    <property type="project" value="UniProtKB-KW"/>
</dbReference>
<dbReference type="GO" id="GO:0032259">
    <property type="term" value="P:methylation"/>
    <property type="evidence" value="ECO:0007669"/>
    <property type="project" value="UniProtKB-KW"/>
</dbReference>
<dbReference type="Gene3D" id="3.40.50.150">
    <property type="entry name" value="Vaccinia Virus protein VP39"/>
    <property type="match status" value="1"/>
</dbReference>
<dbReference type="InterPro" id="IPR051128">
    <property type="entry name" value="EgtD_Methyltrsf_superfamily"/>
</dbReference>
<dbReference type="InterPro" id="IPR019257">
    <property type="entry name" value="MeTrfase_dom"/>
</dbReference>
<dbReference type="InterPro" id="IPR017804">
    <property type="entry name" value="MeTrfase_EgtD-like"/>
</dbReference>
<dbReference type="InterPro" id="IPR029063">
    <property type="entry name" value="SAM-dependent_MTases_sf"/>
</dbReference>
<dbReference type="PANTHER" id="PTHR43397">
    <property type="entry name" value="ERGOTHIONEINE BIOSYNTHESIS PROTEIN 1"/>
    <property type="match status" value="1"/>
</dbReference>
<dbReference type="PANTHER" id="PTHR43397:SF1">
    <property type="entry name" value="ERGOTHIONEINE BIOSYNTHESIS PROTEIN 1"/>
    <property type="match status" value="1"/>
</dbReference>
<dbReference type="Pfam" id="PF10017">
    <property type="entry name" value="Methyltransf_33"/>
    <property type="match status" value="1"/>
</dbReference>
<dbReference type="PIRSF" id="PIRSF018005">
    <property type="entry name" value="UCP018005"/>
    <property type="match status" value="1"/>
</dbReference>
<keyword id="KW-0489">Methyltransferase</keyword>
<keyword id="KW-0949">S-adenosyl-L-methionine</keyword>
<keyword id="KW-0808">Transferase</keyword>
<name>TRPM_PSISE</name>
<protein>
    <recommendedName>
        <fullName evidence="3">L-tryptophan methyltransferase trpM</fullName>
        <ecNumber evidence="1 2">2.1.1.-</ecNumber>
    </recommendedName>
</protein>
<proteinExistence type="evidence at protein level"/>
<organism>
    <name type="scientific">Psilocybe serbica</name>
    <dbReference type="NCBI Taxonomy" id="797126"/>
    <lineage>
        <taxon>Eukaryota</taxon>
        <taxon>Fungi</taxon>
        <taxon>Dikarya</taxon>
        <taxon>Basidiomycota</taxon>
        <taxon>Agaricomycotina</taxon>
        <taxon>Agaricomycetes</taxon>
        <taxon>Agaricomycetidae</taxon>
        <taxon>Agaricales</taxon>
        <taxon>Agaricineae</taxon>
        <taxon>Strophariaceae</taxon>
        <taxon>Psilocybe</taxon>
    </lineage>
</organism>
<evidence type="ECO:0000269" key="1">
    <source>
    </source>
</evidence>
<evidence type="ECO:0000269" key="2">
    <source>
    </source>
</evidence>
<evidence type="ECO:0000303" key="3">
    <source>
    </source>
</evidence>
<evidence type="ECO:0000305" key="4"/>
<evidence type="ECO:0000305" key="5">
    <source>
    </source>
</evidence>
<comment type="function">
    <text evidence="1 2 5">Methyltransferase that catalyzes iterative L-tryptophan N-methylations to produce L-abrine (N-alpha-methyl-L-tryptophan) and N,N-alpha-dimethyl-L-tryptophan (PubMed:30098085, PubMed:38888046). Also catalyzes a third methylation to yield L-hypaphorine (N,N,N-alpha-trimethyl-L-tryptopan), an agonist of the phytohormone indole-3-acetic acid (Probable). Can also N-methylate the non-native amino acid substrate 4-hydroxytryptophan, but the ability to incorporate trpM into a functional psilocybin biosynthesis pathway is indeed thwarted by the inability of the L-tryptophan decarboxylase psiD to use N,N-dimethyl-4-hydroxytryptophan as substrate (PubMed:38888046).</text>
</comment>
<comment type="catalytic activity">
    <reaction evidence="1">
        <text>L-tryptophan + S-adenosyl-L-methionine = N(alpha)-methyl-L-tryptophan + S-adenosyl-L-homocysteine + H(+)</text>
        <dbReference type="Rhea" id="RHEA:80771"/>
        <dbReference type="ChEBI" id="CHEBI:15378"/>
        <dbReference type="ChEBI" id="CHEBI:57283"/>
        <dbReference type="ChEBI" id="CHEBI:57856"/>
        <dbReference type="ChEBI" id="CHEBI:57912"/>
        <dbReference type="ChEBI" id="CHEBI:59789"/>
    </reaction>
    <physiologicalReaction direction="left-to-right" evidence="1">
        <dbReference type="Rhea" id="RHEA:80772"/>
    </physiologicalReaction>
</comment>
<comment type="catalytic activity">
    <reaction evidence="1">
        <text>N(alpha)-methyl-L-tryptophan + S-adenosyl-L-methionine = N(alpha),N(alpha)-dimethyl-L-tryptophan + S-adenosyl-L-homocysteine + H(+)</text>
        <dbReference type="Rhea" id="RHEA:80847"/>
        <dbReference type="ChEBI" id="CHEBI:15378"/>
        <dbReference type="ChEBI" id="CHEBI:57283"/>
        <dbReference type="ChEBI" id="CHEBI:57856"/>
        <dbReference type="ChEBI" id="CHEBI:59789"/>
        <dbReference type="ChEBI" id="CHEBI:231710"/>
    </reaction>
    <physiologicalReaction direction="left-to-right" evidence="1">
        <dbReference type="Rhea" id="RHEA:80848"/>
    </physiologicalReaction>
</comment>
<comment type="catalytic activity">
    <reaction evidence="1">
        <text>N(alpha),N(alpha)-dimethyl-L-tryptophan + S-adenosyl-L-methionine = N(alpha),N(alpha),N(alpha)-trimethyl-L-tryptophan + S-adenosyl-L-homocysteine + H(+)</text>
        <dbReference type="Rhea" id="RHEA:80851"/>
        <dbReference type="ChEBI" id="CHEBI:5832"/>
        <dbReference type="ChEBI" id="CHEBI:15378"/>
        <dbReference type="ChEBI" id="CHEBI:57856"/>
        <dbReference type="ChEBI" id="CHEBI:59789"/>
        <dbReference type="ChEBI" id="CHEBI:231710"/>
    </reaction>
    <physiologicalReaction direction="left-to-right" evidence="1">
        <dbReference type="Rhea" id="RHEA:80852"/>
    </physiologicalReaction>
</comment>
<comment type="biophysicochemical properties">
    <kinetics>
        <KM evidence="1">3.7 uM for L-tryptophan</KM>
        <KM evidence="1">1 uM for L-abrine</KM>
    </kinetics>
    <temperatureDependence>
        <text evidence="2">Optimum temperature is 25 degrees Celsius.</text>
    </temperatureDependence>
</comment>
<comment type="similarity">
    <text evidence="4">Belongs to the methyltransferase superfamily.</text>
</comment>
<accession>A0A346RP51</accession>